<gene>
    <name evidence="1" type="primary">smpB</name>
    <name type="ordered locus">HPAG1_1370</name>
</gene>
<organism>
    <name type="scientific">Helicobacter pylori (strain HPAG1)</name>
    <dbReference type="NCBI Taxonomy" id="357544"/>
    <lineage>
        <taxon>Bacteria</taxon>
        <taxon>Pseudomonadati</taxon>
        <taxon>Campylobacterota</taxon>
        <taxon>Epsilonproteobacteria</taxon>
        <taxon>Campylobacterales</taxon>
        <taxon>Helicobacteraceae</taxon>
        <taxon>Helicobacter</taxon>
    </lineage>
</organism>
<protein>
    <recommendedName>
        <fullName evidence="1">SsrA-binding protein</fullName>
    </recommendedName>
    <alternativeName>
        <fullName evidence="1">Small protein B</fullName>
    </alternativeName>
</protein>
<comment type="function">
    <text evidence="1">Required for rescue of stalled ribosomes mediated by trans-translation. Binds to transfer-messenger RNA (tmRNA), required for stable association of tmRNA with ribosomes. tmRNA and SmpB together mimic tRNA shape, replacing the anticodon stem-loop with SmpB. tmRNA is encoded by the ssrA gene; the 2 termini fold to resemble tRNA(Ala) and it encodes a 'tag peptide', a short internal open reading frame. During trans-translation Ala-aminoacylated tmRNA acts like a tRNA, entering the A-site of stalled ribosomes, displacing the stalled mRNA. The ribosome then switches to translate the ORF on the tmRNA; the nascent peptide is terminated with the 'tag peptide' encoded by the tmRNA and targeted for degradation. The ribosome is freed to recommence translation, which seems to be the essential function of trans-translation.</text>
</comment>
<comment type="subcellular location">
    <subcellularLocation>
        <location evidence="1">Cytoplasm</location>
    </subcellularLocation>
    <text evidence="1">The tmRNA-SmpB complex associates with stalled 70S ribosomes.</text>
</comment>
<comment type="similarity">
    <text evidence="1">Belongs to the SmpB family.</text>
</comment>
<proteinExistence type="inferred from homology"/>
<keyword id="KW-0963">Cytoplasm</keyword>
<keyword id="KW-0694">RNA-binding</keyword>
<evidence type="ECO:0000255" key="1">
    <source>
        <dbReference type="HAMAP-Rule" id="MF_00023"/>
    </source>
</evidence>
<dbReference type="EMBL" id="CP000241">
    <property type="protein sequence ID" value="ABF85437.1"/>
    <property type="molecule type" value="Genomic_DNA"/>
</dbReference>
<dbReference type="RefSeq" id="WP_000766480.1">
    <property type="nucleotide sequence ID" value="NC_008086.1"/>
</dbReference>
<dbReference type="SMR" id="Q1CRI5"/>
<dbReference type="KEGG" id="hpa:HPAG1_1370"/>
<dbReference type="HOGENOM" id="CLU_108953_3_1_7"/>
<dbReference type="GO" id="GO:0005829">
    <property type="term" value="C:cytosol"/>
    <property type="evidence" value="ECO:0007669"/>
    <property type="project" value="TreeGrafter"/>
</dbReference>
<dbReference type="GO" id="GO:0003723">
    <property type="term" value="F:RNA binding"/>
    <property type="evidence" value="ECO:0007669"/>
    <property type="project" value="UniProtKB-UniRule"/>
</dbReference>
<dbReference type="GO" id="GO:0070929">
    <property type="term" value="P:trans-translation"/>
    <property type="evidence" value="ECO:0007669"/>
    <property type="project" value="UniProtKB-UniRule"/>
</dbReference>
<dbReference type="CDD" id="cd09294">
    <property type="entry name" value="SmpB"/>
    <property type="match status" value="1"/>
</dbReference>
<dbReference type="Gene3D" id="2.40.280.10">
    <property type="match status" value="1"/>
</dbReference>
<dbReference type="HAMAP" id="MF_00023">
    <property type="entry name" value="SmpB"/>
    <property type="match status" value="1"/>
</dbReference>
<dbReference type="InterPro" id="IPR023620">
    <property type="entry name" value="SmpB"/>
</dbReference>
<dbReference type="InterPro" id="IPR000037">
    <property type="entry name" value="SsrA-bd_prot"/>
</dbReference>
<dbReference type="InterPro" id="IPR020081">
    <property type="entry name" value="SsrA-bd_prot_CS"/>
</dbReference>
<dbReference type="NCBIfam" id="NF003843">
    <property type="entry name" value="PRK05422.1"/>
    <property type="match status" value="1"/>
</dbReference>
<dbReference type="NCBIfam" id="TIGR00086">
    <property type="entry name" value="smpB"/>
    <property type="match status" value="1"/>
</dbReference>
<dbReference type="PANTHER" id="PTHR30308:SF2">
    <property type="entry name" value="SSRA-BINDING PROTEIN"/>
    <property type="match status" value="1"/>
</dbReference>
<dbReference type="PANTHER" id="PTHR30308">
    <property type="entry name" value="TMRNA-BINDING COMPONENT OF TRANS-TRANSLATION TAGGING COMPLEX"/>
    <property type="match status" value="1"/>
</dbReference>
<dbReference type="Pfam" id="PF01668">
    <property type="entry name" value="SmpB"/>
    <property type="match status" value="1"/>
</dbReference>
<dbReference type="SUPFAM" id="SSF74982">
    <property type="entry name" value="Small protein B (SmpB)"/>
    <property type="match status" value="1"/>
</dbReference>
<dbReference type="PROSITE" id="PS01317">
    <property type="entry name" value="SSRP"/>
    <property type="match status" value="1"/>
</dbReference>
<name>SSRP_HELPH</name>
<feature type="chain" id="PRO_1000002068" description="SsrA-binding protein">
    <location>
        <begin position="1"/>
        <end position="152"/>
    </location>
</feature>
<sequence length="152" mass="17824">MKLIASNKKAYFDYEILETLEAGLALLGSEVKALRQTRVNLKDNFVKIIKGEAFLFGVHISYLDTIHAYYKPNERRERKLLLHKKQLLKWQIEASKERLSIVGLKLYFNQRNRAKIQIALVKGKRLHDKRQSLKEKALNKEILADLKHHFKG</sequence>
<accession>Q1CRI5</accession>
<reference key="1">
    <citation type="journal article" date="2006" name="Proc. Natl. Acad. Sci. U.S.A.">
        <title>The complete genome sequence of a chronic atrophic gastritis Helicobacter pylori strain: evolution during disease progression.</title>
        <authorList>
            <person name="Oh J.D."/>
            <person name="Kling-Baeckhed H."/>
            <person name="Giannakis M."/>
            <person name="Xu J."/>
            <person name="Fulton R.S."/>
            <person name="Fulton L.A."/>
            <person name="Cordum H.S."/>
            <person name="Wang C."/>
            <person name="Elliott G."/>
            <person name="Edwards J."/>
            <person name="Mardis E.R."/>
            <person name="Engstrand L.G."/>
            <person name="Gordon J.I."/>
        </authorList>
    </citation>
    <scope>NUCLEOTIDE SEQUENCE [LARGE SCALE GENOMIC DNA]</scope>
    <source>
        <strain>HPAG1</strain>
    </source>
</reference>